<name>MMLH_CUPPJ</name>
<dbReference type="EMBL" id="X99639">
    <property type="protein sequence ID" value="CAA67957.1"/>
    <property type="molecule type" value="Genomic_DNA"/>
</dbReference>
<dbReference type="EMBL" id="CP000090">
    <property type="protein sequence ID" value="AAZ60871.1"/>
    <property type="molecule type" value="Genomic_DNA"/>
</dbReference>
<dbReference type="SMR" id="O51798"/>
<dbReference type="STRING" id="264198.Reut_A1504"/>
<dbReference type="TCDB" id="2.A.1.15.9">
    <property type="family name" value="the major facilitator superfamily (mfs)"/>
</dbReference>
<dbReference type="KEGG" id="reu:Reut_A1504"/>
<dbReference type="eggNOG" id="COG2814">
    <property type="taxonomic scope" value="Bacteria"/>
</dbReference>
<dbReference type="HOGENOM" id="CLU_001265_46_6_4"/>
<dbReference type="OrthoDB" id="183263at2"/>
<dbReference type="GO" id="GO:0005886">
    <property type="term" value="C:plasma membrane"/>
    <property type="evidence" value="ECO:0007669"/>
    <property type="project" value="UniProtKB-SubCell"/>
</dbReference>
<dbReference type="GO" id="GO:0046943">
    <property type="term" value="F:carboxylic acid transmembrane transporter activity"/>
    <property type="evidence" value="ECO:0007669"/>
    <property type="project" value="TreeGrafter"/>
</dbReference>
<dbReference type="CDD" id="cd17371">
    <property type="entry name" value="MFS_MucK"/>
    <property type="match status" value="1"/>
</dbReference>
<dbReference type="Gene3D" id="1.20.1250.20">
    <property type="entry name" value="MFS general substrate transporter like domains"/>
    <property type="match status" value="2"/>
</dbReference>
<dbReference type="InterPro" id="IPR011701">
    <property type="entry name" value="MFS"/>
</dbReference>
<dbReference type="InterPro" id="IPR020846">
    <property type="entry name" value="MFS_dom"/>
</dbReference>
<dbReference type="InterPro" id="IPR036259">
    <property type="entry name" value="MFS_trans_sf"/>
</dbReference>
<dbReference type="InterPro" id="IPR005829">
    <property type="entry name" value="Sugar_transporter_CS"/>
</dbReference>
<dbReference type="PANTHER" id="PTHR23508">
    <property type="entry name" value="CARBOXYLIC ACID TRANSPORTER PROTEIN HOMOLOG"/>
    <property type="match status" value="1"/>
</dbReference>
<dbReference type="PANTHER" id="PTHR23508:SF10">
    <property type="entry name" value="CARBOXYLIC ACID TRANSPORTER PROTEIN HOMOLOG"/>
    <property type="match status" value="1"/>
</dbReference>
<dbReference type="Pfam" id="PF07690">
    <property type="entry name" value="MFS_1"/>
    <property type="match status" value="1"/>
</dbReference>
<dbReference type="SUPFAM" id="SSF103473">
    <property type="entry name" value="MFS general substrate transporter"/>
    <property type="match status" value="1"/>
</dbReference>
<dbReference type="PROSITE" id="PS50850">
    <property type="entry name" value="MFS"/>
    <property type="match status" value="1"/>
</dbReference>
<dbReference type="PROSITE" id="PS00216">
    <property type="entry name" value="SUGAR_TRANSPORT_1"/>
    <property type="match status" value="1"/>
</dbReference>
<dbReference type="PROSITE" id="PS00217">
    <property type="entry name" value="SUGAR_TRANSPORT_2"/>
    <property type="match status" value="1"/>
</dbReference>
<reference key="1">
    <citation type="journal article" date="1998" name="Gene">
        <title>Characterization of a gene cluster from Ralstonia eutropha JMP134 encoding metabolism of 4-methylmuconolactone.</title>
        <authorList>
            <person name="Erb R.W."/>
            <person name="Timmis K.N."/>
            <person name="Pieper D.H."/>
        </authorList>
    </citation>
    <scope>NUCLEOTIDE SEQUENCE [GENOMIC DNA]</scope>
    <source>
        <strain>JMP134 / LMG 1197</strain>
    </source>
</reference>
<reference key="2">
    <citation type="journal article" date="2010" name="PLoS ONE">
        <title>The complete multipartite genome sequence of Cupriavidus necator JMP134, a versatile pollutant degrader.</title>
        <authorList>
            <person name="Lykidis A."/>
            <person name="Perez-Pantoja D."/>
            <person name="Ledger T."/>
            <person name="Mavromatis K."/>
            <person name="Anderson I.J."/>
            <person name="Ivanova N.N."/>
            <person name="Hooper S.D."/>
            <person name="Lapidus A."/>
            <person name="Lucas S."/>
            <person name="Gonzalez B."/>
            <person name="Kyrpides N.C."/>
        </authorList>
    </citation>
    <scope>NUCLEOTIDE SEQUENCE [LARGE SCALE GENOMIC DNA]</scope>
    <source>
        <strain>JMP134 / LMG 1197</strain>
    </source>
</reference>
<keyword id="KW-0997">Cell inner membrane</keyword>
<keyword id="KW-1003">Cell membrane</keyword>
<keyword id="KW-0472">Membrane</keyword>
<keyword id="KW-0812">Transmembrane</keyword>
<keyword id="KW-1133">Transmembrane helix</keyword>
<keyword id="KW-0813">Transport</keyword>
<protein>
    <recommendedName>
        <fullName evidence="3">Probable 4-methylmuconolactone transporter</fullName>
    </recommendedName>
</protein>
<feature type="chain" id="PRO_0000050309" description="Probable 4-methylmuconolactone transporter">
    <location>
        <begin position="1"/>
        <end position="428"/>
    </location>
</feature>
<feature type="topological domain" description="Cytoplasmic" evidence="1">
    <location>
        <begin position="1"/>
        <end position="26"/>
    </location>
</feature>
<feature type="transmembrane region" description="Helical; Name=1" evidence="1">
    <location>
        <begin position="27"/>
        <end position="47"/>
    </location>
</feature>
<feature type="topological domain" description="Periplasmic" evidence="1">
    <location>
        <begin position="48"/>
        <end position="50"/>
    </location>
</feature>
<feature type="transmembrane region" description="Helical; Name=2" evidence="1">
    <location>
        <begin position="51"/>
        <end position="71"/>
    </location>
</feature>
<feature type="topological domain" description="Cytoplasmic" evidence="1">
    <location>
        <begin position="72"/>
        <end position="80"/>
    </location>
</feature>
<feature type="transmembrane region" description="Helical; Name=3" evidence="1">
    <location>
        <begin position="81"/>
        <end position="101"/>
    </location>
</feature>
<feature type="topological domain" description="Periplasmic" evidence="1">
    <location>
        <begin position="102"/>
        <end position="110"/>
    </location>
</feature>
<feature type="transmembrane region" description="Helical; Name=4" evidence="1">
    <location>
        <begin position="111"/>
        <end position="131"/>
    </location>
</feature>
<feature type="topological domain" description="Cytoplasmic" evidence="1">
    <location>
        <begin position="132"/>
        <end position="145"/>
    </location>
</feature>
<feature type="transmembrane region" description="Helical; Name=5" evidence="1">
    <location>
        <begin position="146"/>
        <end position="166"/>
    </location>
</feature>
<feature type="topological domain" description="Periplasmic" evidence="1">
    <location>
        <position position="167"/>
    </location>
</feature>
<feature type="transmembrane region" description="Helical; Name=6" evidence="1">
    <location>
        <begin position="168"/>
        <end position="188"/>
    </location>
</feature>
<feature type="topological domain" description="Cytoplasmic" evidence="1">
    <location>
        <begin position="189"/>
        <end position="227"/>
    </location>
</feature>
<feature type="transmembrane region" description="Helical; Name=7" evidence="1">
    <location>
        <begin position="228"/>
        <end position="248"/>
    </location>
</feature>
<feature type="topological domain" description="Periplasmic" evidence="1">
    <location>
        <begin position="249"/>
        <end position="252"/>
    </location>
</feature>
<feature type="transmembrane region" description="Helical; Name=8" evidence="1">
    <location>
        <begin position="253"/>
        <end position="273"/>
    </location>
</feature>
<feature type="topological domain" description="Cytoplasmic" evidence="1">
    <location>
        <begin position="274"/>
        <end position="287"/>
    </location>
</feature>
<feature type="transmembrane region" description="Helical; Name=9" evidence="1">
    <location>
        <begin position="288"/>
        <end position="308"/>
    </location>
</feature>
<feature type="topological domain" description="Periplasmic" evidence="1">
    <location>
        <begin position="309"/>
        <end position="314"/>
    </location>
</feature>
<feature type="transmembrane region" description="Helical; Name=10" evidence="1">
    <location>
        <begin position="315"/>
        <end position="335"/>
    </location>
</feature>
<feature type="topological domain" description="Cytoplasmic" evidence="1">
    <location>
        <begin position="336"/>
        <end position="356"/>
    </location>
</feature>
<feature type="transmembrane region" description="Helical; Name=11" evidence="1">
    <location>
        <begin position="357"/>
        <end position="371"/>
    </location>
</feature>
<feature type="topological domain" description="Periplasmic" evidence="1">
    <location>
        <begin position="372"/>
        <end position="377"/>
    </location>
</feature>
<feature type="transmembrane region" description="Helical; Name=12" evidence="1">
    <location>
        <begin position="378"/>
        <end position="398"/>
    </location>
</feature>
<feature type="topological domain" description="Cytoplasmic" evidence="1">
    <location>
        <begin position="399"/>
        <end position="428"/>
    </location>
</feature>
<comment type="function">
    <text evidence="4">Probable uptake of 4-methylmuconolactone.</text>
</comment>
<comment type="subcellular location">
    <subcellularLocation>
        <location evidence="3">Cell inner membrane</location>
        <topology evidence="1">Multi-pass membrane protein</topology>
    </subcellularLocation>
</comment>
<comment type="similarity">
    <text evidence="3">Belongs to the major facilitator superfamily. Sugar transporter (TC 2.A.1.1) family.</text>
</comment>
<evidence type="ECO:0000255" key="1"/>
<evidence type="ECO:0000303" key="2">
    <source>
    </source>
</evidence>
<evidence type="ECO:0000305" key="3"/>
<evidence type="ECO:0000305" key="4">
    <source>
    </source>
</evidence>
<sequence length="428" mass="45804">MFAWYKAGSPQQKKTFWACYSGWALDSFDMQMFSFLLPALTLTWGLTKAEVGVLGTVALVVTAIGGWGAGILSDRYGRARILVLAIIWFTLFGVLAGFAQSYQQLLIARTLQGLGFGGEWAVGAALMAEVIDSRHRGKAIGFVQSGFALGWALAVVVATLLLAWLPKEMAWRVAFWSGIIPALIVLFIRRHVKDSSMFERARQSRAPRASLSSVFNRKYARTLALSSVLVIGLQAGCYAILVWLPSLLNQRQVAAGSMIVTVFIMAFGSFCGFAVTADLSDRIGRRPTLILLSVCAWIVTVSYMLLPLNTTLTAILGFLVGFSAIGMFAALGPFLSELFPTNVRTTCMGFAYNVGKSIGAGSVVGVGVLSTHIGLANAMGTFCLVAYAFAVFGIMLLPETRGIAIENIGEADAHSPAAPLAQPASARS</sequence>
<proteinExistence type="inferred from homology"/>
<gene>
    <name evidence="2" type="primary">mmlH</name>
    <name type="ordered locus">Reut_A1504</name>
</gene>
<organism>
    <name type="scientific">Cupriavidus pinatubonensis (strain JMP 134 / LMG 1197)</name>
    <name type="common">Cupriavidus necator (strain JMP 134)</name>
    <dbReference type="NCBI Taxonomy" id="264198"/>
    <lineage>
        <taxon>Bacteria</taxon>
        <taxon>Pseudomonadati</taxon>
        <taxon>Pseudomonadota</taxon>
        <taxon>Betaproteobacteria</taxon>
        <taxon>Burkholderiales</taxon>
        <taxon>Burkholderiaceae</taxon>
        <taxon>Cupriavidus</taxon>
    </lineage>
</organism>
<accession>O51798</accession>
<accession>Q471R2</accession>